<comment type="subunit">
    <text evidence="6">Component of the mitochondrial ribosome small subunit.</text>
</comment>
<comment type="subcellular location">
    <subcellularLocation>
        <location evidence="3">Mitochondrion</location>
    </subcellularLocation>
</comment>
<comment type="similarity">
    <text evidence="5">Belongs to the PPR family. P subfamily.</text>
</comment>
<comment type="sequence caution" evidence="5">
    <conflict type="erroneous initiation">
        <sequence resource="EMBL-CDS" id="CAA05629"/>
    </conflict>
</comment>
<comment type="online information" name="Pentatricopeptide repeat proteins">
    <link uri="https://ppr.plantenergy.uwa.edu.au"/>
</comment>
<organism>
    <name type="scientific">Arabidopsis thaliana</name>
    <name type="common">Mouse-ear cress</name>
    <dbReference type="NCBI Taxonomy" id="3702"/>
    <lineage>
        <taxon>Eukaryota</taxon>
        <taxon>Viridiplantae</taxon>
        <taxon>Streptophyta</taxon>
        <taxon>Embryophyta</taxon>
        <taxon>Tracheophyta</taxon>
        <taxon>Spermatophyta</taxon>
        <taxon>Magnoliopsida</taxon>
        <taxon>eudicotyledons</taxon>
        <taxon>Gunneridae</taxon>
        <taxon>Pentapetalae</taxon>
        <taxon>rosids</taxon>
        <taxon>malvids</taxon>
        <taxon>Brassicales</taxon>
        <taxon>Brassicaceae</taxon>
        <taxon>Camelineae</taxon>
        <taxon>Arabidopsis</taxon>
    </lineage>
</organism>
<reference key="1">
    <citation type="journal article" date="1999" name="FEBS Lett.">
        <title>Evidence for an ancient chromosomal duplication in Arabidopsis thaliana by sequencing and analyzing a 400-kb contig at the APETALA2 locus on chromosome 4.</title>
        <authorList>
            <person name="Terryn N."/>
            <person name="Heijnen L."/>
            <person name="De Keyser A."/>
            <person name="Van Asseldonck M."/>
            <person name="De Clercq R."/>
            <person name="Verbakel H."/>
            <person name="Gielen J."/>
            <person name="Zabeau M."/>
            <person name="Villarroel R."/>
            <person name="Jesse T."/>
            <person name="Neyt P."/>
            <person name="Hogers R."/>
            <person name="Van Den Daele H."/>
            <person name="Ardiles W."/>
            <person name="Schueller C."/>
            <person name="Mayer K.F.X."/>
            <person name="Dehais P."/>
            <person name="Rombauts S."/>
            <person name="Van Montagu M."/>
            <person name="Rouze P."/>
            <person name="Vos P."/>
        </authorList>
    </citation>
    <scope>NUCLEOTIDE SEQUENCE [MRNA]</scope>
    <source>
        <strain>cv. Columbia</strain>
    </source>
</reference>
<reference key="2">
    <citation type="journal article" date="1998" name="Nature">
        <title>Analysis of 1.9 Mb of contiguous sequence from chromosome 4 of Arabidopsis thaliana.</title>
        <authorList>
            <person name="Bevan M."/>
            <person name="Bancroft I."/>
            <person name="Bent E."/>
            <person name="Love K."/>
            <person name="Goodman H.M."/>
            <person name="Dean C."/>
            <person name="Bergkamp R."/>
            <person name="Dirkse W."/>
            <person name="van Staveren M."/>
            <person name="Stiekema W."/>
            <person name="Drost L."/>
            <person name="Ridley P."/>
            <person name="Hudson S.-A."/>
            <person name="Patel K."/>
            <person name="Murphy G."/>
            <person name="Piffanelli P."/>
            <person name="Wedler H."/>
            <person name="Wedler E."/>
            <person name="Wambutt R."/>
            <person name="Weitzenegger T."/>
            <person name="Pohl T."/>
            <person name="Terryn N."/>
            <person name="Gielen J."/>
            <person name="Villarroel R."/>
            <person name="De Clercq R."/>
            <person name="van Montagu M."/>
            <person name="Lecharny A."/>
            <person name="Aubourg S."/>
            <person name="Gy I."/>
            <person name="Kreis M."/>
            <person name="Lao N."/>
            <person name="Kavanagh T."/>
            <person name="Hempel S."/>
            <person name="Kotter P."/>
            <person name="Entian K.-D."/>
            <person name="Rieger M."/>
            <person name="Schaefer M."/>
            <person name="Funk B."/>
            <person name="Mueller-Auer S."/>
            <person name="Silvey M."/>
            <person name="James R."/>
            <person name="Monfort A."/>
            <person name="Pons A."/>
            <person name="Puigdomenech P."/>
            <person name="Douka A."/>
            <person name="Voukelatou E."/>
            <person name="Milioni D."/>
            <person name="Hatzopoulos P."/>
            <person name="Piravandi E."/>
            <person name="Obermaier B."/>
            <person name="Hilbert H."/>
            <person name="Duesterhoeft A."/>
            <person name="Moores T."/>
            <person name="Jones J.D.G."/>
            <person name="Eneva T."/>
            <person name="Palme K."/>
            <person name="Benes V."/>
            <person name="Rechmann S."/>
            <person name="Ansorge W."/>
            <person name="Cooke R."/>
            <person name="Berger C."/>
            <person name="Delseny M."/>
            <person name="Voet M."/>
            <person name="Volckaert G."/>
            <person name="Mewes H.-W."/>
            <person name="Klosterman S."/>
            <person name="Schueller C."/>
            <person name="Chalwatzis N."/>
        </authorList>
    </citation>
    <scope>NUCLEOTIDE SEQUENCE [LARGE SCALE GENOMIC DNA]</scope>
    <source>
        <strain>cv. Columbia</strain>
    </source>
</reference>
<reference key="3">
    <citation type="journal article" date="1999" name="Nature">
        <title>Sequence and analysis of chromosome 4 of the plant Arabidopsis thaliana.</title>
        <authorList>
            <person name="Mayer K.F.X."/>
            <person name="Schueller C."/>
            <person name="Wambutt R."/>
            <person name="Murphy G."/>
            <person name="Volckaert G."/>
            <person name="Pohl T."/>
            <person name="Duesterhoeft A."/>
            <person name="Stiekema W."/>
            <person name="Entian K.-D."/>
            <person name="Terryn N."/>
            <person name="Harris B."/>
            <person name="Ansorge W."/>
            <person name="Brandt P."/>
            <person name="Grivell L.A."/>
            <person name="Rieger M."/>
            <person name="Weichselgartner M."/>
            <person name="de Simone V."/>
            <person name="Obermaier B."/>
            <person name="Mache R."/>
            <person name="Mueller M."/>
            <person name="Kreis M."/>
            <person name="Delseny M."/>
            <person name="Puigdomenech P."/>
            <person name="Watson M."/>
            <person name="Schmidtheini T."/>
            <person name="Reichert B."/>
            <person name="Portetelle D."/>
            <person name="Perez-Alonso M."/>
            <person name="Boutry M."/>
            <person name="Bancroft I."/>
            <person name="Vos P."/>
            <person name="Hoheisel J."/>
            <person name="Zimmermann W."/>
            <person name="Wedler H."/>
            <person name="Ridley P."/>
            <person name="Langham S.-A."/>
            <person name="McCullagh B."/>
            <person name="Bilham L."/>
            <person name="Robben J."/>
            <person name="van der Schueren J."/>
            <person name="Grymonprez B."/>
            <person name="Chuang Y.-J."/>
            <person name="Vandenbussche F."/>
            <person name="Braeken M."/>
            <person name="Weltjens I."/>
            <person name="Voet M."/>
            <person name="Bastiaens I."/>
            <person name="Aert R."/>
            <person name="Defoor E."/>
            <person name="Weitzenegger T."/>
            <person name="Bothe G."/>
            <person name="Ramsperger U."/>
            <person name="Hilbert H."/>
            <person name="Braun M."/>
            <person name="Holzer E."/>
            <person name="Brandt A."/>
            <person name="Peters S."/>
            <person name="van Staveren M."/>
            <person name="Dirkse W."/>
            <person name="Mooijman P."/>
            <person name="Klein Lankhorst R."/>
            <person name="Rose M."/>
            <person name="Hauf J."/>
            <person name="Koetter P."/>
            <person name="Berneiser S."/>
            <person name="Hempel S."/>
            <person name="Feldpausch M."/>
            <person name="Lamberth S."/>
            <person name="Van den Daele H."/>
            <person name="De Keyser A."/>
            <person name="Buysshaert C."/>
            <person name="Gielen J."/>
            <person name="Villarroel R."/>
            <person name="De Clercq R."/>
            <person name="van Montagu M."/>
            <person name="Rogers J."/>
            <person name="Cronin A."/>
            <person name="Quail M.A."/>
            <person name="Bray-Allen S."/>
            <person name="Clark L."/>
            <person name="Doggett J."/>
            <person name="Hall S."/>
            <person name="Kay M."/>
            <person name="Lennard N."/>
            <person name="McLay K."/>
            <person name="Mayes R."/>
            <person name="Pettett A."/>
            <person name="Rajandream M.A."/>
            <person name="Lyne M."/>
            <person name="Benes V."/>
            <person name="Rechmann S."/>
            <person name="Borkova D."/>
            <person name="Bloecker H."/>
            <person name="Scharfe M."/>
            <person name="Grimm M."/>
            <person name="Loehnert T.-H."/>
            <person name="Dose S."/>
            <person name="de Haan M."/>
            <person name="Maarse A.C."/>
            <person name="Schaefer M."/>
            <person name="Mueller-Auer S."/>
            <person name="Gabel C."/>
            <person name="Fuchs M."/>
            <person name="Fartmann B."/>
            <person name="Granderath K."/>
            <person name="Dauner D."/>
            <person name="Herzl A."/>
            <person name="Neumann S."/>
            <person name="Argiriou A."/>
            <person name="Vitale D."/>
            <person name="Liguori R."/>
            <person name="Piravandi E."/>
            <person name="Massenet O."/>
            <person name="Quigley F."/>
            <person name="Clabauld G."/>
            <person name="Muendlein A."/>
            <person name="Felber R."/>
            <person name="Schnabl S."/>
            <person name="Hiller R."/>
            <person name="Schmidt W."/>
            <person name="Lecharny A."/>
            <person name="Aubourg S."/>
            <person name="Chefdor F."/>
            <person name="Cooke R."/>
            <person name="Berger C."/>
            <person name="Monfort A."/>
            <person name="Casacuberta E."/>
            <person name="Gibbons T."/>
            <person name="Weber N."/>
            <person name="Vandenbol M."/>
            <person name="Bargues M."/>
            <person name="Terol J."/>
            <person name="Torres A."/>
            <person name="Perez-Perez A."/>
            <person name="Purnelle B."/>
            <person name="Bent E."/>
            <person name="Johnson S."/>
            <person name="Tacon D."/>
            <person name="Jesse T."/>
            <person name="Heijnen L."/>
            <person name="Schwarz S."/>
            <person name="Scholler P."/>
            <person name="Heber S."/>
            <person name="Francs P."/>
            <person name="Bielke C."/>
            <person name="Frishman D."/>
            <person name="Haase D."/>
            <person name="Lemcke K."/>
            <person name="Mewes H.-W."/>
            <person name="Stocker S."/>
            <person name="Zaccaria P."/>
            <person name="Bevan M."/>
            <person name="Wilson R.K."/>
            <person name="de la Bastide M."/>
            <person name="Habermann K."/>
            <person name="Parnell L."/>
            <person name="Dedhia N."/>
            <person name="Gnoj L."/>
            <person name="Schutz K."/>
            <person name="Huang E."/>
            <person name="Spiegel L."/>
            <person name="Sekhon M."/>
            <person name="Murray J."/>
            <person name="Sheet P."/>
            <person name="Cordes M."/>
            <person name="Abu-Threideh J."/>
            <person name="Stoneking T."/>
            <person name="Kalicki J."/>
            <person name="Graves T."/>
            <person name="Harmon G."/>
            <person name="Edwards J."/>
            <person name="Latreille P."/>
            <person name="Courtney L."/>
            <person name="Cloud J."/>
            <person name="Abbott A."/>
            <person name="Scott K."/>
            <person name="Johnson D."/>
            <person name="Minx P."/>
            <person name="Bentley D."/>
            <person name="Fulton B."/>
            <person name="Miller N."/>
            <person name="Greco T."/>
            <person name="Kemp K."/>
            <person name="Kramer J."/>
            <person name="Fulton L."/>
            <person name="Mardis E."/>
            <person name="Dante M."/>
            <person name="Pepin K."/>
            <person name="Hillier L.W."/>
            <person name="Nelson J."/>
            <person name="Spieth J."/>
            <person name="Ryan E."/>
            <person name="Andrews S."/>
            <person name="Geisel C."/>
            <person name="Layman D."/>
            <person name="Du H."/>
            <person name="Ali J."/>
            <person name="Berghoff A."/>
            <person name="Jones K."/>
            <person name="Drone K."/>
            <person name="Cotton M."/>
            <person name="Joshu C."/>
            <person name="Antonoiu B."/>
            <person name="Zidanic M."/>
            <person name="Strong C."/>
            <person name="Sun H."/>
            <person name="Lamar B."/>
            <person name="Yordan C."/>
            <person name="Ma P."/>
            <person name="Zhong J."/>
            <person name="Preston R."/>
            <person name="Vil D."/>
            <person name="Shekher M."/>
            <person name="Matero A."/>
            <person name="Shah R."/>
            <person name="Swaby I.K."/>
            <person name="O'Shaughnessy A."/>
            <person name="Rodriguez M."/>
            <person name="Hoffman J."/>
            <person name="Till S."/>
            <person name="Granat S."/>
            <person name="Shohdy N."/>
            <person name="Hasegawa A."/>
            <person name="Hameed A."/>
            <person name="Lodhi M."/>
            <person name="Johnson A."/>
            <person name="Chen E."/>
            <person name="Marra M.A."/>
            <person name="Martienssen R."/>
            <person name="McCombie W.R."/>
        </authorList>
    </citation>
    <scope>NUCLEOTIDE SEQUENCE [LARGE SCALE GENOMIC DNA]</scope>
    <source>
        <strain>cv. Columbia</strain>
    </source>
</reference>
<reference key="4">
    <citation type="journal article" date="2017" name="Plant J.">
        <title>Araport11: a complete reannotation of the Arabidopsis thaliana reference genome.</title>
        <authorList>
            <person name="Cheng C.Y."/>
            <person name="Krishnakumar V."/>
            <person name="Chan A.P."/>
            <person name="Thibaud-Nissen F."/>
            <person name="Schobel S."/>
            <person name="Town C.D."/>
        </authorList>
    </citation>
    <scope>GENOME REANNOTATION</scope>
    <source>
        <strain>cv. Columbia</strain>
    </source>
</reference>
<reference key="5">
    <citation type="journal article" date="2003" name="Science">
        <title>Empirical analysis of transcriptional activity in the Arabidopsis genome.</title>
        <authorList>
            <person name="Yamada K."/>
            <person name="Lim J."/>
            <person name="Dale J.M."/>
            <person name="Chen H."/>
            <person name="Shinn P."/>
            <person name="Palm C.J."/>
            <person name="Southwick A.M."/>
            <person name="Wu H.C."/>
            <person name="Kim C.J."/>
            <person name="Nguyen M."/>
            <person name="Pham P.K."/>
            <person name="Cheuk R.F."/>
            <person name="Karlin-Newmann G."/>
            <person name="Liu S.X."/>
            <person name="Lam B."/>
            <person name="Sakano H."/>
            <person name="Wu T."/>
            <person name="Yu G."/>
            <person name="Miranda M."/>
            <person name="Quach H.L."/>
            <person name="Tripp M."/>
            <person name="Chang C.H."/>
            <person name="Lee J.M."/>
            <person name="Toriumi M.J."/>
            <person name="Chan M.M."/>
            <person name="Tang C.C."/>
            <person name="Onodera C.S."/>
            <person name="Deng J.M."/>
            <person name="Akiyama K."/>
            <person name="Ansari Y."/>
            <person name="Arakawa T."/>
            <person name="Banh J."/>
            <person name="Banno F."/>
            <person name="Bowser L."/>
            <person name="Brooks S.Y."/>
            <person name="Carninci P."/>
            <person name="Chao Q."/>
            <person name="Choy N."/>
            <person name="Enju A."/>
            <person name="Goldsmith A.D."/>
            <person name="Gurjal M."/>
            <person name="Hansen N.F."/>
            <person name="Hayashizaki Y."/>
            <person name="Johnson-Hopson C."/>
            <person name="Hsuan V.W."/>
            <person name="Iida K."/>
            <person name="Karnes M."/>
            <person name="Khan S."/>
            <person name="Koesema E."/>
            <person name="Ishida J."/>
            <person name="Jiang P.X."/>
            <person name="Jones T."/>
            <person name="Kawai J."/>
            <person name="Kamiya A."/>
            <person name="Meyers C."/>
            <person name="Nakajima M."/>
            <person name="Narusaka M."/>
            <person name="Seki M."/>
            <person name="Sakurai T."/>
            <person name="Satou M."/>
            <person name="Tamse R."/>
            <person name="Vaysberg M."/>
            <person name="Wallender E.K."/>
            <person name="Wong C."/>
            <person name="Yamamura Y."/>
            <person name="Yuan S."/>
            <person name="Shinozaki K."/>
            <person name="Davis R.W."/>
            <person name="Theologis A."/>
            <person name="Ecker J.R."/>
        </authorList>
    </citation>
    <scope>NUCLEOTIDE SEQUENCE [LARGE SCALE MRNA]</scope>
    <source>
        <strain>cv. Columbia</strain>
    </source>
</reference>
<reference key="6">
    <citation type="journal article" date="2004" name="Plant Cell">
        <title>Experimental analysis of the Arabidopsis mitochondrial proteome highlights signaling and regulatory components, provides assessment of targeting prediction programs, and indicates plant-specific mitochondrial proteins.</title>
        <authorList>
            <person name="Heazlewood J.L."/>
            <person name="Tonti-Filippini J.S."/>
            <person name="Gout A.M."/>
            <person name="Day D.A."/>
            <person name="Whelan J."/>
            <person name="Millar A.H."/>
        </authorList>
    </citation>
    <scope>IDENTIFICATION BY MASS SPECTROMETRY</scope>
    <scope>SUBCELLULAR LOCATION [LARGE SCALE ANALYSIS]</scope>
    <source>
        <strain>cv. Landsberg erecta</strain>
    </source>
</reference>
<reference key="7">
    <citation type="journal article" date="2004" name="Plant Cell">
        <title>Genome-wide analysis of Arabidopsis pentatricopeptide repeat proteins reveals their essential role in organelle biogenesis.</title>
        <authorList>
            <person name="Lurin C."/>
            <person name="Andres C."/>
            <person name="Aubourg S."/>
            <person name="Bellaoui M."/>
            <person name="Bitton F."/>
            <person name="Bruyere C."/>
            <person name="Caboche M."/>
            <person name="Debast C."/>
            <person name="Gualberto J."/>
            <person name="Hoffmann B."/>
            <person name="Lecharny A."/>
            <person name="Le Ret M."/>
            <person name="Martin-Magniette M.-L."/>
            <person name="Mireau H."/>
            <person name="Peeters N."/>
            <person name="Renou J.-P."/>
            <person name="Szurek B."/>
            <person name="Taconnat L."/>
            <person name="Small I."/>
        </authorList>
    </citation>
    <scope>GENE FAMILY</scope>
</reference>
<reference key="8">
    <citation type="journal article" date="2023" name="Plant Cell">
        <title>An updated nomenclature for plant ribosomal protein genes.</title>
        <authorList>
            <person name="Scarpin M.R."/>
            <person name="Busche M."/>
            <person name="Martinez R.E."/>
            <person name="Harper L.C."/>
            <person name="Reiser L."/>
            <person name="Szakonyi D."/>
            <person name="Merchante C."/>
            <person name="Lan T."/>
            <person name="Xiong W."/>
            <person name="Mo B."/>
            <person name="Tang G."/>
            <person name="Chen X."/>
            <person name="Bailey-Serres J."/>
            <person name="Browning K.S."/>
            <person name="Brunkard J.O."/>
        </authorList>
    </citation>
    <scope>NOMENCLATURE</scope>
</reference>
<feature type="transit peptide" description="Mitochondrion" evidence="1">
    <location>
        <begin position="1"/>
        <end position="14"/>
    </location>
</feature>
<feature type="chain" id="PRO_0000363469" description="Small ribosomal subunit protein mL103 (rPPR7)">
    <location>
        <begin position="15"/>
        <end position="412"/>
    </location>
</feature>
<feature type="repeat" description="PPR 1">
    <location>
        <begin position="101"/>
        <end position="135"/>
    </location>
</feature>
<feature type="repeat" description="PPR 2">
    <location>
        <begin position="136"/>
        <end position="166"/>
    </location>
</feature>
<feature type="repeat" description="PPR 3">
    <location>
        <begin position="173"/>
        <end position="207"/>
    </location>
</feature>
<feature type="repeat" description="PPR 4">
    <location>
        <begin position="208"/>
        <end position="242"/>
    </location>
</feature>
<feature type="repeat" description="PPR 5">
    <location>
        <begin position="243"/>
        <end position="276"/>
    </location>
</feature>
<feature type="repeat" description="PPR 6">
    <location>
        <begin position="277"/>
        <end position="311"/>
    </location>
</feature>
<feature type="repeat" description="PPR 7">
    <location>
        <begin position="312"/>
        <end position="346"/>
    </location>
</feature>
<feature type="repeat" description="PPR 8">
    <location>
        <begin position="347"/>
        <end position="377"/>
    </location>
</feature>
<feature type="region of interest" description="Disordered" evidence="2">
    <location>
        <begin position="21"/>
        <end position="43"/>
    </location>
</feature>
<feature type="compositionally biased region" description="Polar residues" evidence="2">
    <location>
        <begin position="21"/>
        <end position="37"/>
    </location>
</feature>
<accession>Q9M065</accession>
<accession>O23149</accession>
<gene>
    <name type="ordered locus">At4g36680</name>
    <name type="ORF">AP22.65</name>
    <name type="ORF">C7A10.680</name>
</gene>
<proteinExistence type="evidence at protein level"/>
<keyword id="KW-0496">Mitochondrion</keyword>
<keyword id="KW-1185">Reference proteome</keyword>
<keyword id="KW-0677">Repeat</keyword>
<keyword id="KW-0687">Ribonucleoprotein</keyword>
<keyword id="KW-0689">Ribosomal protein</keyword>
<keyword id="KW-0809">Transit peptide</keyword>
<name>PP352_ARATH</name>
<sequence>MASSRISLRLVRRFASAAADGTTTAPSSGKISVSKAKSTLRKEHDPDKALKIYANVSDHSASPVSSRYAQELTVRRLAKCRRFSDIETLIESHKNDPKIKEEPFYSTLIRSYGQASMFNHAMRTFEQMDQYGTPRSAVSFNALLNACLHSKNFDKVPQLFDEIPQRYNKIIPDKISYGILIKSYCDSGTPEKAIEIMRQMQGKGMEVTTIAFTTILSSLYKKGELEVADNLWNEMVKKGCELDNAAYNVRIMSAQKESPERVKELIEEMSSMGLKPDTISYNYLMTAYCERGMLDEAKKVYEGLEGNNCAPNAATFRTLIFHLCYSRLYEQGYAIFKKSVYMHKIPDFNTLKHLVVGLVENKKRDDAKGLIRTVKKKFPPSFLNAWKKLEEELGLYSKTDAFPSSAKEAAAA</sequence>
<protein>
    <recommendedName>
        <fullName evidence="4">Small ribosomal subunit protein mL103 (rPPR7)</fullName>
    </recommendedName>
    <alternativeName>
        <fullName>Pentatricopeptide repeat-containing protein At4g36680, mitochondrial</fullName>
    </alternativeName>
</protein>
<evidence type="ECO:0000255" key="1"/>
<evidence type="ECO:0000256" key="2">
    <source>
        <dbReference type="SAM" id="MobiDB-lite"/>
    </source>
</evidence>
<evidence type="ECO:0000269" key="3">
    <source>
    </source>
</evidence>
<evidence type="ECO:0000303" key="4">
    <source>
    </source>
</evidence>
<evidence type="ECO:0000305" key="5"/>
<evidence type="ECO:0000305" key="6">
    <source>
    </source>
</evidence>
<dbReference type="EMBL" id="AJ002597">
    <property type="protein sequence ID" value="CAA05629.1"/>
    <property type="status" value="ALT_INIT"/>
    <property type="molecule type" value="mRNA"/>
</dbReference>
<dbReference type="EMBL" id="Z99708">
    <property type="protein sequence ID" value="CAB16807.1"/>
    <property type="molecule type" value="Genomic_DNA"/>
</dbReference>
<dbReference type="EMBL" id="AL161589">
    <property type="protein sequence ID" value="CAB80334.1"/>
    <property type="molecule type" value="Genomic_DNA"/>
</dbReference>
<dbReference type="EMBL" id="CP002687">
    <property type="protein sequence ID" value="AEE86686.1"/>
    <property type="molecule type" value="Genomic_DNA"/>
</dbReference>
<dbReference type="EMBL" id="AY064155">
    <property type="protein sequence ID" value="AAL36061.1"/>
    <property type="molecule type" value="mRNA"/>
</dbReference>
<dbReference type="EMBL" id="BT001003">
    <property type="protein sequence ID" value="AAN46757.1"/>
    <property type="molecule type" value="mRNA"/>
</dbReference>
<dbReference type="PIR" id="B85433">
    <property type="entry name" value="B85433"/>
</dbReference>
<dbReference type="PIR" id="T52620">
    <property type="entry name" value="T52620"/>
</dbReference>
<dbReference type="RefSeq" id="NP_195386.1">
    <property type="nucleotide sequence ID" value="NM_119832.5"/>
</dbReference>
<dbReference type="SMR" id="Q9M065"/>
<dbReference type="BioGRID" id="15102">
    <property type="interactions" value="1"/>
</dbReference>
<dbReference type="FunCoup" id="Q9M065">
    <property type="interactions" value="529"/>
</dbReference>
<dbReference type="IntAct" id="Q9M065">
    <property type="interactions" value="1"/>
</dbReference>
<dbReference type="STRING" id="3702.Q9M065"/>
<dbReference type="iPTMnet" id="Q9M065"/>
<dbReference type="PaxDb" id="3702-AT4G36680.1"/>
<dbReference type="ProteomicsDB" id="249246"/>
<dbReference type="DNASU" id="829821"/>
<dbReference type="EnsemblPlants" id="AT4G36680.1">
    <property type="protein sequence ID" value="AT4G36680.1"/>
    <property type="gene ID" value="AT4G36680"/>
</dbReference>
<dbReference type="GeneID" id="829821"/>
<dbReference type="Gramene" id="AT4G36680.1">
    <property type="protein sequence ID" value="AT4G36680.1"/>
    <property type="gene ID" value="AT4G36680"/>
</dbReference>
<dbReference type="KEGG" id="ath:AT4G36680"/>
<dbReference type="Araport" id="AT4G36680"/>
<dbReference type="TAIR" id="AT4G36680">
    <property type="gene designation" value="RPPR7"/>
</dbReference>
<dbReference type="eggNOG" id="KOG4197">
    <property type="taxonomic scope" value="Eukaryota"/>
</dbReference>
<dbReference type="HOGENOM" id="CLU_002706_10_3_1"/>
<dbReference type="InParanoid" id="Q9M065"/>
<dbReference type="OMA" id="NAAYNVR"/>
<dbReference type="OrthoDB" id="185373at2759"/>
<dbReference type="PhylomeDB" id="Q9M065"/>
<dbReference type="PRO" id="PR:Q9M065"/>
<dbReference type="Proteomes" id="UP000006548">
    <property type="component" value="Chromosome 4"/>
</dbReference>
<dbReference type="ExpressionAtlas" id="Q9M065">
    <property type="expression patterns" value="baseline and differential"/>
</dbReference>
<dbReference type="GO" id="GO:0005739">
    <property type="term" value="C:mitochondrion"/>
    <property type="evidence" value="ECO:0007005"/>
    <property type="project" value="TAIR"/>
</dbReference>
<dbReference type="GO" id="GO:0005886">
    <property type="term" value="C:plasma membrane"/>
    <property type="evidence" value="ECO:0007005"/>
    <property type="project" value="TAIR"/>
</dbReference>
<dbReference type="GO" id="GO:1990904">
    <property type="term" value="C:ribonucleoprotein complex"/>
    <property type="evidence" value="ECO:0007669"/>
    <property type="project" value="UniProtKB-KW"/>
</dbReference>
<dbReference type="GO" id="GO:0005840">
    <property type="term" value="C:ribosome"/>
    <property type="evidence" value="ECO:0007669"/>
    <property type="project" value="UniProtKB-KW"/>
</dbReference>
<dbReference type="GO" id="GO:0003729">
    <property type="term" value="F:mRNA binding"/>
    <property type="evidence" value="ECO:0000314"/>
    <property type="project" value="TAIR"/>
</dbReference>
<dbReference type="FunFam" id="1.25.40.10:FF:001892">
    <property type="entry name" value="Pentatricopeptide repeat-containing protein At2g18520, mitochondrial"/>
    <property type="match status" value="1"/>
</dbReference>
<dbReference type="FunFam" id="1.25.40.10:FF:001891">
    <property type="entry name" value="Pentatricopeptide repeat-containing protein At4g36680, mitochondrial"/>
    <property type="match status" value="1"/>
</dbReference>
<dbReference type="Gene3D" id="1.25.40.10">
    <property type="entry name" value="Tetratricopeptide repeat domain"/>
    <property type="match status" value="2"/>
</dbReference>
<dbReference type="InterPro" id="IPR002885">
    <property type="entry name" value="Pentatricopeptide_rpt"/>
</dbReference>
<dbReference type="InterPro" id="IPR011990">
    <property type="entry name" value="TPR-like_helical_dom_sf"/>
</dbReference>
<dbReference type="NCBIfam" id="TIGR00756">
    <property type="entry name" value="PPR"/>
    <property type="match status" value="5"/>
</dbReference>
<dbReference type="PANTHER" id="PTHR47941">
    <property type="entry name" value="PENTATRICOPEPTIDE REPEAT-CONTAINING PROTEIN 3, MITOCHONDRIAL"/>
    <property type="match status" value="1"/>
</dbReference>
<dbReference type="Pfam" id="PF01535">
    <property type="entry name" value="PPR"/>
    <property type="match status" value="1"/>
</dbReference>
<dbReference type="Pfam" id="PF13041">
    <property type="entry name" value="PPR_2"/>
    <property type="match status" value="3"/>
</dbReference>
<dbReference type="PROSITE" id="PS51375">
    <property type="entry name" value="PPR"/>
    <property type="match status" value="8"/>
</dbReference>